<organism>
    <name type="scientific">Symbiobacterium thermophilum (strain DSM 24528 / JCM 14929 / IAM 14863 / T)</name>
    <dbReference type="NCBI Taxonomy" id="292459"/>
    <lineage>
        <taxon>Bacteria</taxon>
        <taxon>Bacillati</taxon>
        <taxon>Bacillota</taxon>
        <taxon>Clostridia</taxon>
        <taxon>Eubacteriales</taxon>
        <taxon>Symbiobacteriaceae</taxon>
        <taxon>Symbiobacterium</taxon>
    </lineage>
</organism>
<proteinExistence type="inferred from homology"/>
<comment type="function">
    <text evidence="1">ATP-binding (A) component of a common energy-coupling factor (ECF) ABC-transporter complex. Unlike classic ABC transporters this ECF transporter provides the energy necessary to transport a number of different substrates.</text>
</comment>
<comment type="subunit">
    <text evidence="1">Forms a stable energy-coupling factor (ECF) transporter complex composed of 2 membrane-embedded substrate-binding proteins (S component), 2 ATP-binding proteins (A component) and 2 transmembrane proteins (T component).</text>
</comment>
<comment type="subcellular location">
    <subcellularLocation>
        <location evidence="1">Cell membrane</location>
        <topology evidence="1">Peripheral membrane protein</topology>
    </subcellularLocation>
</comment>
<comment type="similarity">
    <text evidence="1">Belongs to the ABC transporter superfamily. Energy-coupling factor EcfA family.</text>
</comment>
<reference key="1">
    <citation type="journal article" date="2004" name="Nucleic Acids Res.">
        <title>Genome sequence of Symbiobacterium thermophilum, an uncultivable bacterium that depends on microbial commensalism.</title>
        <authorList>
            <person name="Ueda K."/>
            <person name="Yamashita A."/>
            <person name="Ishikawa J."/>
            <person name="Shimada M."/>
            <person name="Watsuji T."/>
            <person name="Morimura K."/>
            <person name="Ikeda H."/>
            <person name="Hattori M."/>
            <person name="Beppu T."/>
        </authorList>
    </citation>
    <scope>NUCLEOTIDE SEQUENCE [LARGE SCALE GENOMIC DNA]</scope>
    <source>
        <strain>DSM 24528 / JCM 14929 / IAM 14863 / T</strain>
    </source>
</reference>
<accession>Q67JX3</accession>
<keyword id="KW-0067">ATP-binding</keyword>
<keyword id="KW-1003">Cell membrane</keyword>
<keyword id="KW-0472">Membrane</keyword>
<keyword id="KW-0547">Nucleotide-binding</keyword>
<keyword id="KW-1185">Reference proteome</keyword>
<keyword id="KW-1278">Translocase</keyword>
<keyword id="KW-0813">Transport</keyword>
<feature type="chain" id="PRO_0000288016" description="Energy-coupling factor transporter ATP-binding protein EcfA1">
    <location>
        <begin position="1"/>
        <end position="287"/>
    </location>
</feature>
<feature type="domain" description="ABC transporter" evidence="1">
    <location>
        <begin position="6"/>
        <end position="248"/>
    </location>
</feature>
<feature type="binding site" evidence="1">
    <location>
        <begin position="47"/>
        <end position="54"/>
    </location>
    <ligand>
        <name>ATP</name>
        <dbReference type="ChEBI" id="CHEBI:30616"/>
    </ligand>
</feature>
<sequence>MTNPYIVAEGVSYAYGREEADGAAPVRLALDGVDLDVRRGEFLAILGMNGSGKSTLARHLNALLLPRAGRVLVDGLDTREEANLWSIRDRVGMVFQNPDNQIVAAVVEEDVAFGPENQGLPSAEIRARVAEALEAVGMSEHRERSPHLLSGGQKQRVAIAGALAMRPACLVLDEPTAMLDPSGRAEVLAVVRRLNRELGMTVVWITHFMDEAVVADRVVVMAEGRVQMVGTPREVFAQADRIRALRLDLPPAVQAAERLRAQGVPLPRTILTLDELVEALCQLYSRP</sequence>
<protein>
    <recommendedName>
        <fullName evidence="1">Energy-coupling factor transporter ATP-binding protein EcfA1</fullName>
        <shortName evidence="1">ECF transporter A component EcfA1</shortName>
        <ecNumber evidence="1">7.-.-.-</ecNumber>
    </recommendedName>
</protein>
<dbReference type="EC" id="7.-.-.-" evidence="1"/>
<dbReference type="EMBL" id="AP006840">
    <property type="protein sequence ID" value="BAD42027.1"/>
    <property type="molecule type" value="Genomic_DNA"/>
</dbReference>
<dbReference type="RefSeq" id="WP_011197160.1">
    <property type="nucleotide sequence ID" value="NC_006177.1"/>
</dbReference>
<dbReference type="SMR" id="Q67JX3"/>
<dbReference type="STRING" id="292459.STH3045"/>
<dbReference type="KEGG" id="sth:STH3045"/>
<dbReference type="eggNOG" id="COG1122">
    <property type="taxonomic scope" value="Bacteria"/>
</dbReference>
<dbReference type="HOGENOM" id="CLU_000604_1_22_9"/>
<dbReference type="OrthoDB" id="9784332at2"/>
<dbReference type="Proteomes" id="UP000000417">
    <property type="component" value="Chromosome"/>
</dbReference>
<dbReference type="GO" id="GO:0043190">
    <property type="term" value="C:ATP-binding cassette (ABC) transporter complex"/>
    <property type="evidence" value="ECO:0007669"/>
    <property type="project" value="TreeGrafter"/>
</dbReference>
<dbReference type="GO" id="GO:0005524">
    <property type="term" value="F:ATP binding"/>
    <property type="evidence" value="ECO:0007669"/>
    <property type="project" value="UniProtKB-KW"/>
</dbReference>
<dbReference type="GO" id="GO:0016887">
    <property type="term" value="F:ATP hydrolysis activity"/>
    <property type="evidence" value="ECO:0007669"/>
    <property type="project" value="InterPro"/>
</dbReference>
<dbReference type="GO" id="GO:0042626">
    <property type="term" value="F:ATPase-coupled transmembrane transporter activity"/>
    <property type="evidence" value="ECO:0007669"/>
    <property type="project" value="TreeGrafter"/>
</dbReference>
<dbReference type="GO" id="GO:0006824">
    <property type="term" value="P:cobalt ion transport"/>
    <property type="evidence" value="ECO:0007669"/>
    <property type="project" value="InterPro"/>
</dbReference>
<dbReference type="CDD" id="cd03225">
    <property type="entry name" value="ABC_cobalt_CbiO_domain1"/>
    <property type="match status" value="1"/>
</dbReference>
<dbReference type="FunFam" id="3.40.50.300:FF:000224">
    <property type="entry name" value="Energy-coupling factor transporter ATP-binding protein EcfA"/>
    <property type="match status" value="1"/>
</dbReference>
<dbReference type="Gene3D" id="3.40.50.300">
    <property type="entry name" value="P-loop containing nucleotide triphosphate hydrolases"/>
    <property type="match status" value="1"/>
</dbReference>
<dbReference type="InterPro" id="IPR003593">
    <property type="entry name" value="AAA+_ATPase"/>
</dbReference>
<dbReference type="InterPro" id="IPR003439">
    <property type="entry name" value="ABC_transporter-like_ATP-bd"/>
</dbReference>
<dbReference type="InterPro" id="IPR017871">
    <property type="entry name" value="ABC_transporter-like_CS"/>
</dbReference>
<dbReference type="InterPro" id="IPR015856">
    <property type="entry name" value="ABC_transpr_CbiO/EcfA_su"/>
</dbReference>
<dbReference type="InterPro" id="IPR005876">
    <property type="entry name" value="Co_trans_ATP-bd"/>
</dbReference>
<dbReference type="InterPro" id="IPR050095">
    <property type="entry name" value="ECF_ABC_transporter_ATP-bd"/>
</dbReference>
<dbReference type="InterPro" id="IPR030947">
    <property type="entry name" value="EcfA_1"/>
</dbReference>
<dbReference type="InterPro" id="IPR027417">
    <property type="entry name" value="P-loop_NTPase"/>
</dbReference>
<dbReference type="NCBIfam" id="TIGR01166">
    <property type="entry name" value="cbiO"/>
    <property type="match status" value="1"/>
</dbReference>
<dbReference type="NCBIfam" id="TIGR04520">
    <property type="entry name" value="ECF_ATPase_1"/>
    <property type="match status" value="1"/>
</dbReference>
<dbReference type="PANTHER" id="PTHR43553:SF24">
    <property type="entry name" value="ENERGY-COUPLING FACTOR TRANSPORTER ATP-BINDING PROTEIN ECFA1"/>
    <property type="match status" value="1"/>
</dbReference>
<dbReference type="PANTHER" id="PTHR43553">
    <property type="entry name" value="HEAVY METAL TRANSPORTER"/>
    <property type="match status" value="1"/>
</dbReference>
<dbReference type="Pfam" id="PF00005">
    <property type="entry name" value="ABC_tran"/>
    <property type="match status" value="1"/>
</dbReference>
<dbReference type="SMART" id="SM00382">
    <property type="entry name" value="AAA"/>
    <property type="match status" value="1"/>
</dbReference>
<dbReference type="SUPFAM" id="SSF52540">
    <property type="entry name" value="P-loop containing nucleoside triphosphate hydrolases"/>
    <property type="match status" value="1"/>
</dbReference>
<dbReference type="PROSITE" id="PS00211">
    <property type="entry name" value="ABC_TRANSPORTER_1"/>
    <property type="match status" value="1"/>
</dbReference>
<dbReference type="PROSITE" id="PS50893">
    <property type="entry name" value="ABC_TRANSPORTER_2"/>
    <property type="match status" value="1"/>
</dbReference>
<dbReference type="PROSITE" id="PS51246">
    <property type="entry name" value="CBIO"/>
    <property type="match status" value="1"/>
</dbReference>
<evidence type="ECO:0000255" key="1">
    <source>
        <dbReference type="HAMAP-Rule" id="MF_01710"/>
    </source>
</evidence>
<name>ECFA1_SYMTH</name>
<gene>
    <name evidence="1" type="primary">ecfA1</name>
    <name type="synonym">cbiO1</name>
    <name type="ordered locus">STH3045</name>
</gene>